<keyword id="KW-0028">Amino-acid biosynthesis</keyword>
<keyword id="KW-0057">Aromatic amino acid biosynthesis</keyword>
<keyword id="KW-0274">FAD</keyword>
<keyword id="KW-0285">Flavoprotein</keyword>
<keyword id="KW-0288">FMN</keyword>
<keyword id="KW-0456">Lyase</keyword>
<keyword id="KW-0521">NADP</keyword>
<comment type="function">
    <text evidence="1">Catalyzes the anti-1,4-elimination of the C-3 phosphate and the C-6 proR hydrogen from 5-enolpyruvylshikimate-3-phosphate (EPSP) to yield chorismate, which is the branch point compound that serves as the starting substrate for the three terminal pathways of aromatic amino acid biosynthesis. This reaction introduces a second double bond into the aromatic ring system.</text>
</comment>
<comment type="catalytic activity">
    <reaction evidence="1">
        <text>5-O-(1-carboxyvinyl)-3-phosphoshikimate = chorismate + phosphate</text>
        <dbReference type="Rhea" id="RHEA:21020"/>
        <dbReference type="ChEBI" id="CHEBI:29748"/>
        <dbReference type="ChEBI" id="CHEBI:43474"/>
        <dbReference type="ChEBI" id="CHEBI:57701"/>
        <dbReference type="EC" id="4.2.3.5"/>
    </reaction>
</comment>
<comment type="cofactor">
    <cofactor evidence="1">
        <name>FMNH2</name>
        <dbReference type="ChEBI" id="CHEBI:57618"/>
    </cofactor>
    <text evidence="1">Reduced FMN (FMNH(2)).</text>
</comment>
<comment type="pathway">
    <text evidence="1">Metabolic intermediate biosynthesis; chorismate biosynthesis; chorismate from D-erythrose 4-phosphate and phosphoenolpyruvate: step 7/7.</text>
</comment>
<comment type="subunit">
    <text evidence="1">Homotetramer.</text>
</comment>
<comment type="similarity">
    <text evidence="1">Belongs to the chorismate synthase family.</text>
</comment>
<sequence length="363" mass="39001">MAGNSIGQLFRVTTCGESHGVGLMAIVDGVPPGLALTEEDLQKDLDRRKPGTSKFATQRKEPDQVEIISGVFEGKTTGTPIGLLIRNTDQKSKDYGNIAQTFRPGHADYTYTQKYGFRDYRGGGRSSARETAMRVAAGAIAKKYLAEKFGVLIRGHVTQIGNEVAEKLDWNEVPNNPFFCGDVDAVPRFEALVTSLREQGTSCGAKLEILAEKVPVGWGEPVFDRLDADIAHAMMSINAVKGVEIGDGFAVAGQFGHETRDELTSHGFLANHAGGILGGISSGQTIRVAIALKPTASITTPGKTINLNREDTDVLTKGRHDPCVGVRATPIAEAMLAIVLMDHFLRHRAQNADVVPPFAPIEP</sequence>
<dbReference type="EC" id="4.2.3.5" evidence="1"/>
<dbReference type="EMBL" id="CP001172">
    <property type="protein sequence ID" value="ACJ56690.1"/>
    <property type="molecule type" value="Genomic_DNA"/>
</dbReference>
<dbReference type="RefSeq" id="WP_000918444.1">
    <property type="nucleotide sequence ID" value="NZ_CP001172.1"/>
</dbReference>
<dbReference type="SMR" id="B7H3A6"/>
<dbReference type="GeneID" id="92893903"/>
<dbReference type="HOGENOM" id="CLU_034547_0_2_6"/>
<dbReference type="UniPathway" id="UPA00053">
    <property type="reaction ID" value="UER00090"/>
</dbReference>
<dbReference type="Proteomes" id="UP000006924">
    <property type="component" value="Chromosome"/>
</dbReference>
<dbReference type="GO" id="GO:0005829">
    <property type="term" value="C:cytosol"/>
    <property type="evidence" value="ECO:0007669"/>
    <property type="project" value="TreeGrafter"/>
</dbReference>
<dbReference type="GO" id="GO:0004107">
    <property type="term" value="F:chorismate synthase activity"/>
    <property type="evidence" value="ECO:0007669"/>
    <property type="project" value="UniProtKB-UniRule"/>
</dbReference>
<dbReference type="GO" id="GO:0010181">
    <property type="term" value="F:FMN binding"/>
    <property type="evidence" value="ECO:0007669"/>
    <property type="project" value="TreeGrafter"/>
</dbReference>
<dbReference type="GO" id="GO:0008652">
    <property type="term" value="P:amino acid biosynthetic process"/>
    <property type="evidence" value="ECO:0007669"/>
    <property type="project" value="UniProtKB-KW"/>
</dbReference>
<dbReference type="GO" id="GO:0009073">
    <property type="term" value="P:aromatic amino acid family biosynthetic process"/>
    <property type="evidence" value="ECO:0007669"/>
    <property type="project" value="UniProtKB-KW"/>
</dbReference>
<dbReference type="GO" id="GO:0009423">
    <property type="term" value="P:chorismate biosynthetic process"/>
    <property type="evidence" value="ECO:0007669"/>
    <property type="project" value="UniProtKB-UniRule"/>
</dbReference>
<dbReference type="CDD" id="cd07304">
    <property type="entry name" value="Chorismate_synthase"/>
    <property type="match status" value="1"/>
</dbReference>
<dbReference type="FunFam" id="3.60.150.10:FF:000001">
    <property type="entry name" value="Chorismate synthase"/>
    <property type="match status" value="1"/>
</dbReference>
<dbReference type="Gene3D" id="3.60.150.10">
    <property type="entry name" value="Chorismate synthase AroC"/>
    <property type="match status" value="1"/>
</dbReference>
<dbReference type="HAMAP" id="MF_00300">
    <property type="entry name" value="Chorismate_synth"/>
    <property type="match status" value="1"/>
</dbReference>
<dbReference type="InterPro" id="IPR000453">
    <property type="entry name" value="Chorismate_synth"/>
</dbReference>
<dbReference type="InterPro" id="IPR035904">
    <property type="entry name" value="Chorismate_synth_AroC_sf"/>
</dbReference>
<dbReference type="InterPro" id="IPR020541">
    <property type="entry name" value="Chorismate_synthase_CS"/>
</dbReference>
<dbReference type="NCBIfam" id="TIGR00033">
    <property type="entry name" value="aroC"/>
    <property type="match status" value="1"/>
</dbReference>
<dbReference type="NCBIfam" id="NF003793">
    <property type="entry name" value="PRK05382.1"/>
    <property type="match status" value="1"/>
</dbReference>
<dbReference type="PANTHER" id="PTHR21085">
    <property type="entry name" value="CHORISMATE SYNTHASE"/>
    <property type="match status" value="1"/>
</dbReference>
<dbReference type="PANTHER" id="PTHR21085:SF0">
    <property type="entry name" value="CHORISMATE SYNTHASE"/>
    <property type="match status" value="1"/>
</dbReference>
<dbReference type="Pfam" id="PF01264">
    <property type="entry name" value="Chorismate_synt"/>
    <property type="match status" value="1"/>
</dbReference>
<dbReference type="PIRSF" id="PIRSF001456">
    <property type="entry name" value="Chorismate_synth"/>
    <property type="match status" value="1"/>
</dbReference>
<dbReference type="SUPFAM" id="SSF103263">
    <property type="entry name" value="Chorismate synthase, AroC"/>
    <property type="match status" value="1"/>
</dbReference>
<dbReference type="PROSITE" id="PS00787">
    <property type="entry name" value="CHORISMATE_SYNTHASE_1"/>
    <property type="match status" value="1"/>
</dbReference>
<dbReference type="PROSITE" id="PS00788">
    <property type="entry name" value="CHORISMATE_SYNTHASE_2"/>
    <property type="match status" value="1"/>
</dbReference>
<dbReference type="PROSITE" id="PS00789">
    <property type="entry name" value="CHORISMATE_SYNTHASE_3"/>
    <property type="match status" value="1"/>
</dbReference>
<accession>B7H3A6</accession>
<gene>
    <name evidence="1" type="primary">aroC</name>
    <name type="ordered locus">ABBFA_001801</name>
</gene>
<protein>
    <recommendedName>
        <fullName evidence="1">Chorismate synthase</fullName>
        <shortName evidence="1">CS</shortName>
        <ecNumber evidence="1">4.2.3.5</ecNumber>
    </recommendedName>
    <alternativeName>
        <fullName evidence="1">5-enolpyruvylshikimate-3-phosphate phospholyase</fullName>
    </alternativeName>
</protein>
<name>AROC_ACIB3</name>
<reference key="1">
    <citation type="journal article" date="2008" name="J. Bacteriol.">
        <title>Comparative genome sequence analysis of multidrug-resistant Acinetobacter baumannii.</title>
        <authorList>
            <person name="Adams M.D."/>
            <person name="Goglin K."/>
            <person name="Molyneaux N."/>
            <person name="Hujer K.M."/>
            <person name="Lavender H."/>
            <person name="Jamison J.J."/>
            <person name="MacDonald I.J."/>
            <person name="Martin K.M."/>
            <person name="Russo T."/>
            <person name="Campagnari A.A."/>
            <person name="Hujer A.M."/>
            <person name="Bonomo R.A."/>
            <person name="Gill S.R."/>
        </authorList>
    </citation>
    <scope>NUCLEOTIDE SEQUENCE [LARGE SCALE GENOMIC DNA]</scope>
    <source>
        <strain>AB307-0294</strain>
    </source>
</reference>
<feature type="chain" id="PRO_1000119482" description="Chorismate synthase">
    <location>
        <begin position="1"/>
        <end position="363"/>
    </location>
</feature>
<feature type="binding site" evidence="1">
    <location>
        <position position="48"/>
    </location>
    <ligand>
        <name>NADP(+)</name>
        <dbReference type="ChEBI" id="CHEBI:58349"/>
    </ligand>
</feature>
<feature type="binding site" evidence="1">
    <location>
        <begin position="125"/>
        <end position="127"/>
    </location>
    <ligand>
        <name>FMN</name>
        <dbReference type="ChEBI" id="CHEBI:58210"/>
    </ligand>
</feature>
<feature type="binding site" evidence="1">
    <location>
        <begin position="238"/>
        <end position="239"/>
    </location>
    <ligand>
        <name>FMN</name>
        <dbReference type="ChEBI" id="CHEBI:58210"/>
    </ligand>
</feature>
<feature type="binding site" evidence="1">
    <location>
        <position position="278"/>
    </location>
    <ligand>
        <name>FMN</name>
        <dbReference type="ChEBI" id="CHEBI:58210"/>
    </ligand>
</feature>
<feature type="binding site" evidence="1">
    <location>
        <begin position="293"/>
        <end position="297"/>
    </location>
    <ligand>
        <name>FMN</name>
        <dbReference type="ChEBI" id="CHEBI:58210"/>
    </ligand>
</feature>
<feature type="binding site" evidence="1">
    <location>
        <position position="319"/>
    </location>
    <ligand>
        <name>FMN</name>
        <dbReference type="ChEBI" id="CHEBI:58210"/>
    </ligand>
</feature>
<proteinExistence type="inferred from homology"/>
<evidence type="ECO:0000255" key="1">
    <source>
        <dbReference type="HAMAP-Rule" id="MF_00300"/>
    </source>
</evidence>
<organism>
    <name type="scientific">Acinetobacter baumannii (strain AB307-0294)</name>
    <dbReference type="NCBI Taxonomy" id="557600"/>
    <lineage>
        <taxon>Bacteria</taxon>
        <taxon>Pseudomonadati</taxon>
        <taxon>Pseudomonadota</taxon>
        <taxon>Gammaproteobacteria</taxon>
        <taxon>Moraxellales</taxon>
        <taxon>Moraxellaceae</taxon>
        <taxon>Acinetobacter</taxon>
        <taxon>Acinetobacter calcoaceticus/baumannii complex</taxon>
    </lineage>
</organism>